<name>RL34_SHEAM</name>
<protein>
    <recommendedName>
        <fullName evidence="1">Large ribosomal subunit protein bL34</fullName>
    </recommendedName>
    <alternativeName>
        <fullName evidence="3">50S ribosomal protein L34</fullName>
    </alternativeName>
</protein>
<evidence type="ECO:0000255" key="1">
    <source>
        <dbReference type="HAMAP-Rule" id="MF_00391"/>
    </source>
</evidence>
<evidence type="ECO:0000256" key="2">
    <source>
        <dbReference type="SAM" id="MobiDB-lite"/>
    </source>
</evidence>
<evidence type="ECO:0000305" key="3"/>
<proteinExistence type="inferred from homology"/>
<feature type="chain" id="PRO_1000013437" description="Large ribosomal subunit protein bL34">
    <location>
        <begin position="1"/>
        <end position="45"/>
    </location>
</feature>
<feature type="region of interest" description="Disordered" evidence="2">
    <location>
        <begin position="1"/>
        <end position="45"/>
    </location>
</feature>
<feature type="compositionally biased region" description="Polar residues" evidence="2">
    <location>
        <begin position="1"/>
        <end position="10"/>
    </location>
</feature>
<feature type="compositionally biased region" description="Basic residues" evidence="2">
    <location>
        <begin position="11"/>
        <end position="20"/>
    </location>
</feature>
<feature type="compositionally biased region" description="Basic residues" evidence="2">
    <location>
        <begin position="31"/>
        <end position="45"/>
    </location>
</feature>
<organism>
    <name type="scientific">Shewanella amazonensis (strain ATCC BAA-1098 / SB2B)</name>
    <dbReference type="NCBI Taxonomy" id="326297"/>
    <lineage>
        <taxon>Bacteria</taxon>
        <taxon>Pseudomonadati</taxon>
        <taxon>Pseudomonadota</taxon>
        <taxon>Gammaproteobacteria</taxon>
        <taxon>Alteromonadales</taxon>
        <taxon>Shewanellaceae</taxon>
        <taxon>Shewanella</taxon>
    </lineage>
</organism>
<sequence length="45" mass="5182">MSKRTFQPSNLKRKRSHGFRARMATANGRKVLARRRAKGRARLSA</sequence>
<dbReference type="EMBL" id="CP000507">
    <property type="protein sequence ID" value="ABL98224.1"/>
    <property type="molecule type" value="Genomic_DNA"/>
</dbReference>
<dbReference type="RefSeq" id="WP_011758135.1">
    <property type="nucleotide sequence ID" value="NC_008700.1"/>
</dbReference>
<dbReference type="SMR" id="A1S1G8"/>
<dbReference type="STRING" id="326297.Sama_0012"/>
<dbReference type="GeneID" id="93811430"/>
<dbReference type="KEGG" id="saz:Sama_0012"/>
<dbReference type="eggNOG" id="COG0230">
    <property type="taxonomic scope" value="Bacteria"/>
</dbReference>
<dbReference type="HOGENOM" id="CLU_129938_2_0_6"/>
<dbReference type="Proteomes" id="UP000009175">
    <property type="component" value="Chromosome"/>
</dbReference>
<dbReference type="GO" id="GO:1990904">
    <property type="term" value="C:ribonucleoprotein complex"/>
    <property type="evidence" value="ECO:0007669"/>
    <property type="project" value="UniProtKB-KW"/>
</dbReference>
<dbReference type="GO" id="GO:0005840">
    <property type="term" value="C:ribosome"/>
    <property type="evidence" value="ECO:0007669"/>
    <property type="project" value="UniProtKB-KW"/>
</dbReference>
<dbReference type="GO" id="GO:0003735">
    <property type="term" value="F:structural constituent of ribosome"/>
    <property type="evidence" value="ECO:0007669"/>
    <property type="project" value="InterPro"/>
</dbReference>
<dbReference type="GO" id="GO:0006412">
    <property type="term" value="P:translation"/>
    <property type="evidence" value="ECO:0007669"/>
    <property type="project" value="UniProtKB-UniRule"/>
</dbReference>
<dbReference type="FunFam" id="1.10.287.3980:FF:000001">
    <property type="entry name" value="Mitochondrial ribosomal protein L34"/>
    <property type="match status" value="1"/>
</dbReference>
<dbReference type="Gene3D" id="1.10.287.3980">
    <property type="match status" value="1"/>
</dbReference>
<dbReference type="HAMAP" id="MF_00391">
    <property type="entry name" value="Ribosomal_bL34"/>
    <property type="match status" value="1"/>
</dbReference>
<dbReference type="InterPro" id="IPR000271">
    <property type="entry name" value="Ribosomal_bL34"/>
</dbReference>
<dbReference type="InterPro" id="IPR020939">
    <property type="entry name" value="Ribosomal_bL34_CS"/>
</dbReference>
<dbReference type="NCBIfam" id="TIGR01030">
    <property type="entry name" value="rpmH_bact"/>
    <property type="match status" value="1"/>
</dbReference>
<dbReference type="PANTHER" id="PTHR14503:SF4">
    <property type="entry name" value="LARGE RIBOSOMAL SUBUNIT PROTEIN BL34M"/>
    <property type="match status" value="1"/>
</dbReference>
<dbReference type="PANTHER" id="PTHR14503">
    <property type="entry name" value="MITOCHONDRIAL RIBOSOMAL PROTEIN 34 FAMILY MEMBER"/>
    <property type="match status" value="1"/>
</dbReference>
<dbReference type="Pfam" id="PF00468">
    <property type="entry name" value="Ribosomal_L34"/>
    <property type="match status" value="1"/>
</dbReference>
<dbReference type="PROSITE" id="PS00784">
    <property type="entry name" value="RIBOSOMAL_L34"/>
    <property type="match status" value="1"/>
</dbReference>
<gene>
    <name evidence="1" type="primary">rpmH</name>
    <name type="ordered locus">Sama_0012</name>
</gene>
<accession>A1S1G8</accession>
<keyword id="KW-1185">Reference proteome</keyword>
<keyword id="KW-0687">Ribonucleoprotein</keyword>
<keyword id="KW-0689">Ribosomal protein</keyword>
<comment type="similarity">
    <text evidence="1">Belongs to the bacterial ribosomal protein bL34 family.</text>
</comment>
<reference key="1">
    <citation type="submission" date="2006-12" db="EMBL/GenBank/DDBJ databases">
        <title>Complete sequence of Shewanella amazonensis SB2B.</title>
        <authorList>
            <consortium name="US DOE Joint Genome Institute"/>
            <person name="Copeland A."/>
            <person name="Lucas S."/>
            <person name="Lapidus A."/>
            <person name="Barry K."/>
            <person name="Detter J.C."/>
            <person name="Glavina del Rio T."/>
            <person name="Hammon N."/>
            <person name="Israni S."/>
            <person name="Dalin E."/>
            <person name="Tice H."/>
            <person name="Pitluck S."/>
            <person name="Munk A.C."/>
            <person name="Brettin T."/>
            <person name="Bruce D."/>
            <person name="Han C."/>
            <person name="Tapia R."/>
            <person name="Gilna P."/>
            <person name="Schmutz J."/>
            <person name="Larimer F."/>
            <person name="Land M."/>
            <person name="Hauser L."/>
            <person name="Kyrpides N."/>
            <person name="Mikhailova N."/>
            <person name="Fredrickson J."/>
            <person name="Richardson P."/>
        </authorList>
    </citation>
    <scope>NUCLEOTIDE SEQUENCE [LARGE SCALE GENOMIC DNA]</scope>
    <source>
        <strain>ATCC BAA-1098 / SB2B</strain>
    </source>
</reference>